<evidence type="ECO:0000250" key="1"/>
<evidence type="ECO:0000255" key="2"/>
<evidence type="ECO:0000305" key="3"/>
<dbReference type="EMBL" id="AF166114">
    <property type="protein sequence ID" value="AAF43864.1"/>
    <property type="molecule type" value="Genomic_DNA"/>
</dbReference>
<dbReference type="RefSeq" id="NP_038424.1">
    <property type="nucleotide sequence ID" value="NC_002186.1"/>
</dbReference>
<dbReference type="SMR" id="Q9MUN6"/>
<dbReference type="GeneID" id="800894"/>
<dbReference type="GO" id="GO:0009535">
    <property type="term" value="C:chloroplast thylakoid membrane"/>
    <property type="evidence" value="ECO:0007669"/>
    <property type="project" value="UniProtKB-SubCell"/>
</dbReference>
<dbReference type="GO" id="GO:0009055">
    <property type="term" value="F:electron transfer activity"/>
    <property type="evidence" value="ECO:0007669"/>
    <property type="project" value="UniProtKB-UniRule"/>
</dbReference>
<dbReference type="GO" id="GO:0020037">
    <property type="term" value="F:heme binding"/>
    <property type="evidence" value="ECO:0007669"/>
    <property type="project" value="InterPro"/>
</dbReference>
<dbReference type="GO" id="GO:0005506">
    <property type="term" value="F:iron ion binding"/>
    <property type="evidence" value="ECO:0007669"/>
    <property type="project" value="InterPro"/>
</dbReference>
<dbReference type="GO" id="GO:0015979">
    <property type="term" value="P:photosynthesis"/>
    <property type="evidence" value="ECO:0007669"/>
    <property type="project" value="UniProtKB-UniRule"/>
</dbReference>
<dbReference type="FunFam" id="2.60.40.830:FF:000001">
    <property type="entry name" value="Cytochrome f"/>
    <property type="match status" value="1"/>
</dbReference>
<dbReference type="Gene3D" id="2.40.50.100">
    <property type="match status" value="1"/>
</dbReference>
<dbReference type="Gene3D" id="2.60.40.830">
    <property type="entry name" value="Cytochrome f large domain"/>
    <property type="match status" value="1"/>
</dbReference>
<dbReference type="Gene3D" id="1.20.5.700">
    <property type="entry name" value="Single helix bin"/>
    <property type="match status" value="1"/>
</dbReference>
<dbReference type="HAMAP" id="MF_00610">
    <property type="entry name" value="Cytb6_f_cytF"/>
    <property type="match status" value="1"/>
</dbReference>
<dbReference type="InterPro" id="IPR024058">
    <property type="entry name" value="Cyt-f_TM"/>
</dbReference>
<dbReference type="InterPro" id="IPR002325">
    <property type="entry name" value="Cyt_f"/>
</dbReference>
<dbReference type="InterPro" id="IPR024094">
    <property type="entry name" value="Cyt_f_lg_dom"/>
</dbReference>
<dbReference type="InterPro" id="IPR036826">
    <property type="entry name" value="Cyt_f_lg_dom_sf"/>
</dbReference>
<dbReference type="InterPro" id="IPR011054">
    <property type="entry name" value="Rudment_hybrid_motif"/>
</dbReference>
<dbReference type="PANTHER" id="PTHR33288">
    <property type="match status" value="1"/>
</dbReference>
<dbReference type="PANTHER" id="PTHR33288:SF10">
    <property type="entry name" value="CYTOCHROME F"/>
    <property type="match status" value="1"/>
</dbReference>
<dbReference type="Pfam" id="PF01333">
    <property type="entry name" value="Apocytochr_F_C"/>
    <property type="match status" value="1"/>
</dbReference>
<dbReference type="Pfam" id="PF16639">
    <property type="entry name" value="Apocytochr_F_N"/>
    <property type="match status" value="1"/>
</dbReference>
<dbReference type="PRINTS" id="PR00610">
    <property type="entry name" value="CYTOCHROMEF"/>
</dbReference>
<dbReference type="SUPFAM" id="SSF103431">
    <property type="entry name" value="Cytochrome f subunit of the cytochrome b6f complex, transmembrane anchor"/>
    <property type="match status" value="1"/>
</dbReference>
<dbReference type="SUPFAM" id="SSF49441">
    <property type="entry name" value="Cytochrome f, large domain"/>
    <property type="match status" value="1"/>
</dbReference>
<dbReference type="SUPFAM" id="SSF51246">
    <property type="entry name" value="Rudiment single hybrid motif"/>
    <property type="match status" value="1"/>
</dbReference>
<dbReference type="PROSITE" id="PS51010">
    <property type="entry name" value="CYTF"/>
    <property type="match status" value="1"/>
</dbReference>
<reference key="1">
    <citation type="journal article" date="2000" name="Nature">
        <title>Ancestral chloroplast genome in Mesostigma viride reveals an early branch of green plant evolution.</title>
        <authorList>
            <person name="Lemieux C."/>
            <person name="Otis C."/>
            <person name="Turmel M."/>
        </authorList>
    </citation>
    <scope>NUCLEOTIDE SEQUENCE [LARGE SCALE GENOMIC DNA]</scope>
    <source>
        <strain>NIES-296 / KY-14 / CCMP 2046</strain>
    </source>
</reference>
<geneLocation type="chloroplast"/>
<gene>
    <name type="primary">petA</name>
</gene>
<comment type="function">
    <text evidence="1">Component of the cytochrome b6-f complex, which mediates electron transfer between photosystem II (PSII) and photosystem I (PSI), cyclic electron flow around PSI, and state transitions.</text>
</comment>
<comment type="cofactor">
    <cofactor evidence="1">
        <name>heme</name>
        <dbReference type="ChEBI" id="CHEBI:30413"/>
    </cofactor>
    <text evidence="1">Binds 1 heme group covalently.</text>
</comment>
<comment type="subunit">
    <text evidence="1">The 4 large subunits of the cytochrome b6-f complex are cytochrome b6, subunit IV (17 kDa polypeptide, petD), cytochrome f and the Rieske protein, while the 4 small subunits are PetG, PetL, PetM and PetN. The complex functions as a dimer (By similarity).</text>
</comment>
<comment type="subcellular location">
    <subcellularLocation>
        <location evidence="1">Plastid</location>
        <location evidence="1">Chloroplast thylakoid membrane</location>
        <topology evidence="1">Single-pass membrane protein</topology>
    </subcellularLocation>
</comment>
<comment type="similarity">
    <text evidence="3">Belongs to the cytochrome f family.</text>
</comment>
<protein>
    <recommendedName>
        <fullName>Cytochrome f</fullName>
    </recommendedName>
</protein>
<accession>Q9MUN6</accession>
<feature type="signal peptide" evidence="1">
    <location>
        <begin position="1"/>
        <end position="31"/>
    </location>
</feature>
<feature type="chain" id="PRO_0000023820" description="Cytochrome f">
    <location>
        <begin position="32"/>
        <end position="313"/>
    </location>
</feature>
<feature type="transmembrane region" description="Helical" evidence="2">
    <location>
        <begin position="279"/>
        <end position="298"/>
    </location>
</feature>
<feature type="binding site" description="axial binding residue" evidence="1">
    <location>
        <position position="32"/>
    </location>
    <ligand>
        <name>heme</name>
        <dbReference type="ChEBI" id="CHEBI:30413"/>
    </ligand>
    <ligandPart>
        <name>Fe</name>
        <dbReference type="ChEBI" id="CHEBI:18248"/>
    </ligandPart>
</feature>
<feature type="binding site" description="covalent" evidence="1">
    <location>
        <position position="52"/>
    </location>
    <ligand>
        <name>heme</name>
        <dbReference type="ChEBI" id="CHEBI:30413"/>
    </ligand>
</feature>
<feature type="binding site" description="covalent" evidence="1">
    <location>
        <position position="55"/>
    </location>
    <ligand>
        <name>heme</name>
        <dbReference type="ChEBI" id="CHEBI:30413"/>
    </ligand>
</feature>
<feature type="binding site" description="axial binding residue" evidence="1">
    <location>
        <position position="56"/>
    </location>
    <ligand>
        <name>heme</name>
        <dbReference type="ChEBI" id="CHEBI:30413"/>
    </ligand>
    <ligandPart>
        <name>Fe</name>
        <dbReference type="ChEBI" id="CHEBI:18248"/>
    </ligandPart>
</feature>
<name>CYF_MESVI</name>
<proteinExistence type="inferred from homology"/>
<keyword id="KW-0150">Chloroplast</keyword>
<keyword id="KW-0249">Electron transport</keyword>
<keyword id="KW-0349">Heme</keyword>
<keyword id="KW-0408">Iron</keyword>
<keyword id="KW-0472">Membrane</keyword>
<keyword id="KW-0479">Metal-binding</keyword>
<keyword id="KW-0602">Photosynthesis</keyword>
<keyword id="KW-0934">Plastid</keyword>
<keyword id="KW-0732">Signal</keyword>
<keyword id="KW-0793">Thylakoid</keyword>
<keyword id="KW-0812">Transmembrane</keyword>
<keyword id="KW-1133">Transmembrane helix</keyword>
<keyword id="KW-0813">Transport</keyword>
<sequence>MQNMFSFLSNKKIIALFLIIGTIFMPLSSEAYPIFAQQNYASPREATGRIVCANCHLAKKPVDIEVPQAVLPDTVFEAVVKIPYDTQVQQVLGNGKKGPLNVGAVLILPEGFKLAPQDRIPEEMKSKISNLYFQPYNAANENILVIGPIPGDKNREIVFPILSPDPAKDKGTYFIKYPISVGANRGRGQVYPDGSKSNNTVYNASVSGTITDIIKEKKAYKISIETKDGTVVDTVPVGPELIVAKGDTVVTGQPITDNPNVGGFGQMDTEVVLQNPVRIKWLIAFLILSTLGQVFLVLKKKQFERVQIAESNF</sequence>
<organism>
    <name type="scientific">Mesostigma viride</name>
    <name type="common">Green alga</name>
    <dbReference type="NCBI Taxonomy" id="41882"/>
    <lineage>
        <taxon>Eukaryota</taxon>
        <taxon>Viridiplantae</taxon>
        <taxon>Streptophyta</taxon>
        <taxon>Mesostigmatophyceae</taxon>
        <taxon>Mesostigmatales</taxon>
        <taxon>Mesostigmataceae</taxon>
        <taxon>Mesostigma</taxon>
    </lineage>
</organism>